<evidence type="ECO:0000255" key="1"/>
<evidence type="ECO:0000255" key="2">
    <source>
        <dbReference type="PROSITE-ProRule" id="PRU00175"/>
    </source>
</evidence>
<evidence type="ECO:0000269" key="3">
    <source>
    </source>
</evidence>
<evidence type="ECO:0000269" key="4">
    <source>
    </source>
</evidence>
<evidence type="ECO:0000305" key="5"/>
<gene>
    <name type="primary">VPS11</name>
    <name type="ordered locus">At2g05170</name>
    <name type="ORF">F5G3.7</name>
</gene>
<reference key="1">
    <citation type="journal article" date="1999" name="Nature">
        <title>Sequence and analysis of chromosome 2 of the plant Arabidopsis thaliana.</title>
        <authorList>
            <person name="Lin X."/>
            <person name="Kaul S."/>
            <person name="Rounsley S.D."/>
            <person name="Shea T.P."/>
            <person name="Benito M.-I."/>
            <person name="Town C.D."/>
            <person name="Fujii C.Y."/>
            <person name="Mason T.M."/>
            <person name="Bowman C.L."/>
            <person name="Barnstead M.E."/>
            <person name="Feldblyum T.V."/>
            <person name="Buell C.R."/>
            <person name="Ketchum K.A."/>
            <person name="Lee J.J."/>
            <person name="Ronning C.M."/>
            <person name="Koo H.L."/>
            <person name="Moffat K.S."/>
            <person name="Cronin L.A."/>
            <person name="Shen M."/>
            <person name="Pai G."/>
            <person name="Van Aken S."/>
            <person name="Umayam L."/>
            <person name="Tallon L.J."/>
            <person name="Gill J.E."/>
            <person name="Adams M.D."/>
            <person name="Carrera A.J."/>
            <person name="Creasy T.H."/>
            <person name="Goodman H.M."/>
            <person name="Somerville C.R."/>
            <person name="Copenhaver G.P."/>
            <person name="Preuss D."/>
            <person name="Nierman W.C."/>
            <person name="White O."/>
            <person name="Eisen J.A."/>
            <person name="Salzberg S.L."/>
            <person name="Fraser C.M."/>
            <person name="Venter J.C."/>
        </authorList>
    </citation>
    <scope>NUCLEOTIDE SEQUENCE [LARGE SCALE GENOMIC DNA]</scope>
    <source>
        <strain>cv. Columbia</strain>
    </source>
</reference>
<reference key="2">
    <citation type="journal article" date="2017" name="Plant J.">
        <title>Araport11: a complete reannotation of the Arabidopsis thaliana reference genome.</title>
        <authorList>
            <person name="Cheng C.Y."/>
            <person name="Krishnakumar V."/>
            <person name="Chan A.P."/>
            <person name="Thibaud-Nissen F."/>
            <person name="Schobel S."/>
            <person name="Town C.D."/>
        </authorList>
    </citation>
    <scope>GENOME REANNOTATION</scope>
    <source>
        <strain>cv. Columbia</strain>
    </source>
</reference>
<reference key="3">
    <citation type="journal article" date="2003" name="Science">
        <title>Empirical analysis of transcriptional activity in the Arabidopsis genome.</title>
        <authorList>
            <person name="Yamada K."/>
            <person name="Lim J."/>
            <person name="Dale J.M."/>
            <person name="Chen H."/>
            <person name="Shinn P."/>
            <person name="Palm C.J."/>
            <person name="Southwick A.M."/>
            <person name="Wu H.C."/>
            <person name="Kim C.J."/>
            <person name="Nguyen M."/>
            <person name="Pham P.K."/>
            <person name="Cheuk R.F."/>
            <person name="Karlin-Newmann G."/>
            <person name="Liu S.X."/>
            <person name="Lam B."/>
            <person name="Sakano H."/>
            <person name="Wu T."/>
            <person name="Yu G."/>
            <person name="Miranda M."/>
            <person name="Quach H.L."/>
            <person name="Tripp M."/>
            <person name="Chang C.H."/>
            <person name="Lee J.M."/>
            <person name="Toriumi M.J."/>
            <person name="Chan M.M."/>
            <person name="Tang C.C."/>
            <person name="Onodera C.S."/>
            <person name="Deng J.M."/>
            <person name="Akiyama K."/>
            <person name="Ansari Y."/>
            <person name="Arakawa T."/>
            <person name="Banh J."/>
            <person name="Banno F."/>
            <person name="Bowser L."/>
            <person name="Brooks S.Y."/>
            <person name="Carninci P."/>
            <person name="Chao Q."/>
            <person name="Choy N."/>
            <person name="Enju A."/>
            <person name="Goldsmith A.D."/>
            <person name="Gurjal M."/>
            <person name="Hansen N.F."/>
            <person name="Hayashizaki Y."/>
            <person name="Johnson-Hopson C."/>
            <person name="Hsuan V.W."/>
            <person name="Iida K."/>
            <person name="Karnes M."/>
            <person name="Khan S."/>
            <person name="Koesema E."/>
            <person name="Ishida J."/>
            <person name="Jiang P.X."/>
            <person name="Jones T."/>
            <person name="Kawai J."/>
            <person name="Kamiya A."/>
            <person name="Meyers C."/>
            <person name="Nakajima M."/>
            <person name="Narusaka M."/>
            <person name="Seki M."/>
            <person name="Sakurai T."/>
            <person name="Satou M."/>
            <person name="Tamse R."/>
            <person name="Vaysberg M."/>
            <person name="Wallender E.K."/>
            <person name="Wong C."/>
            <person name="Yamamura Y."/>
            <person name="Yuan S."/>
            <person name="Shinozaki K."/>
            <person name="Davis R.W."/>
            <person name="Theologis A."/>
            <person name="Ecker J.R."/>
        </authorList>
    </citation>
    <scope>NUCLEOTIDE SEQUENCE [LARGE SCALE MRNA]</scope>
    <source>
        <strain>cv. Columbia</strain>
    </source>
</reference>
<reference key="4">
    <citation type="submission" date="2002-03" db="EMBL/GenBank/DDBJ databases">
        <title>Full-length cDNA from Arabidopsis thaliana.</title>
        <authorList>
            <person name="Brover V.V."/>
            <person name="Troukhan M.E."/>
            <person name="Alexandrov N.A."/>
            <person name="Lu Y.-P."/>
            <person name="Flavell R.B."/>
            <person name="Feldmann K.A."/>
        </authorList>
    </citation>
    <scope>NUCLEOTIDE SEQUENCE [LARGE SCALE MRNA] OF 651-932</scope>
</reference>
<reference key="5">
    <citation type="journal article" date="2003" name="Mol. Biol. Cell">
        <title>The AtC-VPS protein complex is localized to the tonoplast and the prevacuolar compartment in arabidopsis.</title>
        <authorList>
            <person name="Rojo E."/>
            <person name="Zouhar J."/>
            <person name="Kovaleva V."/>
            <person name="Hong S."/>
            <person name="Raikhel N.V."/>
        </authorList>
    </citation>
    <scope>FUNCTION</scope>
    <scope>IDENTIFICATION IN THE C-VSP COMPLEX</scope>
    <scope>TISSUE SPECIFICITY</scope>
    <scope>SUBCELLULAR LOCATION</scope>
</reference>
<reference key="6">
    <citation type="journal article" date="2018" name="Proc. Natl. Acad. Sci. U.S.A.">
        <title>Distinct sets of tethering complexes, SNARE complexes, and Rab GTPases mediate membrane fusion at the vacuole in Arabidopsis.</title>
        <authorList>
            <person name="Takemoto K."/>
            <person name="Ebine K."/>
            <person name="Askani J.C."/>
            <person name="Krueger F."/>
            <person name="Gonzalez Z.A."/>
            <person name="Ito E."/>
            <person name="Goh T."/>
            <person name="Schumacher K."/>
            <person name="Nakano A."/>
            <person name="Ueda T."/>
        </authorList>
    </citation>
    <scope>INTERACTION WITH VPS39 AND VPS3</scope>
    <scope>IDENTIFICATION BY MASS SPECTROMETRY</scope>
</reference>
<organism>
    <name type="scientific">Arabidopsis thaliana</name>
    <name type="common">Mouse-ear cress</name>
    <dbReference type="NCBI Taxonomy" id="3702"/>
    <lineage>
        <taxon>Eukaryota</taxon>
        <taxon>Viridiplantae</taxon>
        <taxon>Streptophyta</taxon>
        <taxon>Embryophyta</taxon>
        <taxon>Tracheophyta</taxon>
        <taxon>Spermatophyta</taxon>
        <taxon>Magnoliopsida</taxon>
        <taxon>eudicotyledons</taxon>
        <taxon>Gunneridae</taxon>
        <taxon>Pentapetalae</taxon>
        <taxon>rosids</taxon>
        <taxon>malvids</taxon>
        <taxon>Brassicales</taxon>
        <taxon>Brassicaceae</taxon>
        <taxon>Camelineae</taxon>
        <taxon>Arabidopsis</taxon>
    </lineage>
</organism>
<keyword id="KW-0175">Coiled coil</keyword>
<keyword id="KW-0472">Membrane</keyword>
<keyword id="KW-0479">Metal-binding</keyword>
<keyword id="KW-1185">Reference proteome</keyword>
<keyword id="KW-0677">Repeat</keyword>
<keyword id="KW-0926">Vacuole</keyword>
<keyword id="KW-0862">Zinc</keyword>
<keyword id="KW-0863">Zinc-finger</keyword>
<dbReference type="EMBL" id="AC007018">
    <property type="protein sequence ID" value="AAD29055.1"/>
    <property type="molecule type" value="Genomic_DNA"/>
</dbReference>
<dbReference type="EMBL" id="CP002685">
    <property type="protein sequence ID" value="AEC05900.1"/>
    <property type="molecule type" value="Genomic_DNA"/>
</dbReference>
<dbReference type="EMBL" id="AF436824">
    <property type="protein sequence ID" value="AAL32006.1"/>
    <property type="molecule type" value="mRNA"/>
</dbReference>
<dbReference type="EMBL" id="BT002698">
    <property type="protein sequence ID" value="AAO11614.1"/>
    <property type="molecule type" value="mRNA"/>
</dbReference>
<dbReference type="EMBL" id="AY084412">
    <property type="protein sequence ID" value="AAM60986.1"/>
    <property type="status" value="ALT_INIT"/>
    <property type="molecule type" value="mRNA"/>
</dbReference>
<dbReference type="PIR" id="F84465">
    <property type="entry name" value="F84465"/>
</dbReference>
<dbReference type="RefSeq" id="NP_027676.1">
    <property type="nucleotide sequence ID" value="NM_126544.3"/>
</dbReference>
<dbReference type="SMR" id="Q9SJ40"/>
<dbReference type="BioGRID" id="465">
    <property type="interactions" value="2"/>
</dbReference>
<dbReference type="FunCoup" id="Q9SJ40">
    <property type="interactions" value="4171"/>
</dbReference>
<dbReference type="STRING" id="3702.Q9SJ40"/>
<dbReference type="PaxDb" id="3702-AT2G05170.1"/>
<dbReference type="ProteomicsDB" id="242565"/>
<dbReference type="EnsemblPlants" id="AT2G05170.1">
    <property type="protein sequence ID" value="AT2G05170.1"/>
    <property type="gene ID" value="AT2G05170"/>
</dbReference>
<dbReference type="GeneID" id="815065"/>
<dbReference type="Gramene" id="AT2G05170.1">
    <property type="protein sequence ID" value="AT2G05170.1"/>
    <property type="gene ID" value="AT2G05170"/>
</dbReference>
<dbReference type="KEGG" id="ath:AT2G05170"/>
<dbReference type="Araport" id="AT2G05170"/>
<dbReference type="TAIR" id="AT2G05170">
    <property type="gene designation" value="VPS11"/>
</dbReference>
<dbReference type="eggNOG" id="KOG2114">
    <property type="taxonomic scope" value="Eukaryota"/>
</dbReference>
<dbReference type="HOGENOM" id="CLU_001287_0_1_1"/>
<dbReference type="InParanoid" id="Q9SJ40"/>
<dbReference type="OMA" id="ENENECP"/>
<dbReference type="OrthoDB" id="26184at2759"/>
<dbReference type="PhylomeDB" id="Q9SJ40"/>
<dbReference type="PRO" id="PR:Q9SJ40"/>
<dbReference type="Proteomes" id="UP000006548">
    <property type="component" value="Chromosome 2"/>
</dbReference>
<dbReference type="ExpressionAtlas" id="Q9SJ40">
    <property type="expression patterns" value="baseline and differential"/>
</dbReference>
<dbReference type="GO" id="GO:0033263">
    <property type="term" value="C:CORVET complex"/>
    <property type="evidence" value="ECO:0000314"/>
    <property type="project" value="UniProtKB"/>
</dbReference>
<dbReference type="GO" id="GO:0030897">
    <property type="term" value="C:HOPS complex"/>
    <property type="evidence" value="ECO:0000314"/>
    <property type="project" value="UniProtKB"/>
</dbReference>
<dbReference type="GO" id="GO:0005739">
    <property type="term" value="C:mitochondrion"/>
    <property type="evidence" value="ECO:0007005"/>
    <property type="project" value="TAIR"/>
</dbReference>
<dbReference type="GO" id="GO:0009705">
    <property type="term" value="C:plant-type vacuole membrane"/>
    <property type="evidence" value="ECO:0000314"/>
    <property type="project" value="TAIR"/>
</dbReference>
<dbReference type="GO" id="GO:0032991">
    <property type="term" value="C:protein-containing complex"/>
    <property type="evidence" value="ECO:0000353"/>
    <property type="project" value="UniProtKB"/>
</dbReference>
<dbReference type="GO" id="GO:0008270">
    <property type="term" value="F:zinc ion binding"/>
    <property type="evidence" value="ECO:0007669"/>
    <property type="project" value="UniProtKB-KW"/>
</dbReference>
<dbReference type="GO" id="GO:0006886">
    <property type="term" value="P:intracellular protein transport"/>
    <property type="evidence" value="ECO:0007669"/>
    <property type="project" value="InterPro"/>
</dbReference>
<dbReference type="GO" id="GO:0007033">
    <property type="term" value="P:vacuole organization"/>
    <property type="evidence" value="ECO:0000304"/>
    <property type="project" value="TAIR"/>
</dbReference>
<dbReference type="GO" id="GO:0016192">
    <property type="term" value="P:vesicle-mediated transport"/>
    <property type="evidence" value="ECO:0007669"/>
    <property type="project" value="InterPro"/>
</dbReference>
<dbReference type="CDD" id="cd16688">
    <property type="entry name" value="RING-H2_Vps11"/>
    <property type="match status" value="1"/>
</dbReference>
<dbReference type="FunFam" id="1.25.40.10:FF:000278">
    <property type="entry name" value="Vacuolar protein sorting-associated protein 11 homolog"/>
    <property type="match status" value="1"/>
</dbReference>
<dbReference type="Gene3D" id="1.25.40.10">
    <property type="entry name" value="Tetratricopeptide repeat domain"/>
    <property type="match status" value="1"/>
</dbReference>
<dbReference type="Gene3D" id="2.130.10.10">
    <property type="entry name" value="YVTN repeat-like/Quinoprotein amine dehydrogenase"/>
    <property type="match status" value="1"/>
</dbReference>
<dbReference type="Gene3D" id="3.30.40.10">
    <property type="entry name" value="Zinc/RING finger domain, C3HC4 (zinc finger)"/>
    <property type="match status" value="1"/>
</dbReference>
<dbReference type="InterPro" id="IPR016024">
    <property type="entry name" value="ARM-type_fold"/>
</dbReference>
<dbReference type="InterPro" id="IPR000547">
    <property type="entry name" value="Clathrin_H-chain/VPS_repeat"/>
</dbReference>
<dbReference type="InterPro" id="IPR011990">
    <property type="entry name" value="TPR-like_helical_dom_sf"/>
</dbReference>
<dbReference type="InterPro" id="IPR016528">
    <property type="entry name" value="VPS11"/>
</dbReference>
<dbReference type="InterPro" id="IPR024763">
    <property type="entry name" value="VPS11_C"/>
</dbReference>
<dbReference type="InterPro" id="IPR015943">
    <property type="entry name" value="WD40/YVTN_repeat-like_dom_sf"/>
</dbReference>
<dbReference type="InterPro" id="IPR036322">
    <property type="entry name" value="WD40_repeat_dom_sf"/>
</dbReference>
<dbReference type="InterPro" id="IPR001841">
    <property type="entry name" value="Znf_RING"/>
</dbReference>
<dbReference type="InterPro" id="IPR013083">
    <property type="entry name" value="Znf_RING/FYVE/PHD"/>
</dbReference>
<dbReference type="PANTHER" id="PTHR23323">
    <property type="entry name" value="VACUOLAR PROTEIN SORTING-ASSOCIATED PROTEIN"/>
    <property type="match status" value="1"/>
</dbReference>
<dbReference type="PANTHER" id="PTHR23323:SF24">
    <property type="entry name" value="VACUOLAR PROTEIN SORTING-ASSOCIATED PROTEIN 11 HOMOLOG"/>
    <property type="match status" value="1"/>
</dbReference>
<dbReference type="Pfam" id="PF23356">
    <property type="entry name" value="TPR_PEP5_VPS11"/>
    <property type="match status" value="2"/>
</dbReference>
<dbReference type="Pfam" id="PF12451">
    <property type="entry name" value="VPS11_C"/>
    <property type="match status" value="1"/>
</dbReference>
<dbReference type="Pfam" id="PF23266">
    <property type="entry name" value="VPS11_N"/>
    <property type="match status" value="1"/>
</dbReference>
<dbReference type="Pfam" id="PF17122">
    <property type="entry name" value="zf-C3H2C3"/>
    <property type="match status" value="1"/>
</dbReference>
<dbReference type="PIRSF" id="PIRSF007860">
    <property type="entry name" value="VPS11"/>
    <property type="match status" value="1"/>
</dbReference>
<dbReference type="SUPFAM" id="SSF48371">
    <property type="entry name" value="ARM repeat"/>
    <property type="match status" value="1"/>
</dbReference>
<dbReference type="SUPFAM" id="SSF57850">
    <property type="entry name" value="RING/U-box"/>
    <property type="match status" value="1"/>
</dbReference>
<dbReference type="SUPFAM" id="SSF50978">
    <property type="entry name" value="WD40 repeat-like"/>
    <property type="match status" value="1"/>
</dbReference>
<dbReference type="PROSITE" id="PS50236">
    <property type="entry name" value="CHCR"/>
    <property type="match status" value="2"/>
</dbReference>
<dbReference type="PROSITE" id="PS50089">
    <property type="entry name" value="ZF_RING_2"/>
    <property type="match status" value="1"/>
</dbReference>
<comment type="function">
    <text evidence="3">Involved in regulating membrane fusion at the tonoplast and the prevacuolar compartment.</text>
</comment>
<comment type="subunit">
    <text evidence="3 4">Core component of at least two putative endosomal tethering complexes, the homotypic fusion and vacuole protein sorting (HOPS) complex and the class C core vacuole/endosome tethering (CORVET) complex. Their common core is composed of the class C Vps proteins VPS11, VCL1, VPS18 and VPS33, which in HOPS further associates with VPS39 and VPS41 and in CORVET with VPS3 (PubMed:12589039, PubMed:29463724). Interacts directly with VPS39 and VPS3 (PubMed:29463724).</text>
</comment>
<comment type="subcellular location">
    <subcellularLocation>
        <location evidence="3">Vacuole membrane</location>
        <topology evidence="3">Peripheral membrane protein</topology>
    </subcellularLocation>
    <subcellularLocation>
        <location evidence="3">Prevacuolar compartment membrane</location>
        <topology evidence="3">Peripheral membrane protein</topology>
    </subcellularLocation>
</comment>
<comment type="tissue specificity">
    <text evidence="3">Expressed in roots, leaves, stems, siliques and flowers.</text>
</comment>
<comment type="similarity">
    <text evidence="5">Belongs to the VPS11 family.</text>
</comment>
<comment type="sequence caution" evidence="5">
    <conflict type="erroneous initiation">
        <sequence resource="EMBL-CDS" id="AAM60986"/>
    </conflict>
    <text>Truncated N-terminus.</text>
</comment>
<protein>
    <recommendedName>
        <fullName>Vacuolar protein-sorting-associated protein 11 homolog</fullName>
        <shortName>AtVPS11</shortName>
    </recommendedName>
</protein>
<accession>Q9SJ40</accession>
<accession>Q8LG85</accession>
<proteinExistence type="evidence at protein level"/>
<name>VPS11_ARATH</name>
<feature type="chain" id="PRO_0000425971" description="Vacuolar protein-sorting-associated protein 11 homolog">
    <location>
        <begin position="1"/>
        <end position="932"/>
    </location>
</feature>
<feature type="repeat" description="CHCR 1">
    <location>
        <begin position="385"/>
        <end position="536"/>
    </location>
</feature>
<feature type="repeat" description="CHCR 2">
    <location>
        <begin position="548"/>
        <end position="756"/>
    </location>
</feature>
<feature type="zinc finger region" description="RING-type; atypical" evidence="2">
    <location>
        <begin position="842"/>
        <end position="877"/>
    </location>
</feature>
<feature type="coiled-coil region" evidence="1">
    <location>
        <begin position="795"/>
        <end position="841"/>
    </location>
</feature>
<feature type="sequence conflict" description="In Ref. 4; AAM60986." evidence="5" ref="4">
    <original>V</original>
    <variation>A</variation>
    <location>
        <position position="884"/>
    </location>
</feature>
<feature type="sequence conflict" description="In Ref. 4; AAM60986." evidence="5" ref="4">
    <original>E</original>
    <variation>Q</variation>
    <location>
        <position position="892"/>
    </location>
</feature>
<sequence length="932" mass="105713">MYQLRKFDFFEEKYGGKIPEDVTGDIQCCSSGRGKVVIGSNDGSVSFLDRGVKFDSGFQAHSSSVLFLQHLKQRNFLVTVGEDEQISPQQSGMCLKVFDLDKVQEEGTSSSAPECIGILRIFTNQFPEAKITSFLVLEEVPPILLIAIGLDNGCIYCVKGDIARERITRFKLQVDGRSAITGLGFRMDGQALLLFAVTPESVNLFSMQAQPPKLQTLDHIGGSVNTVTMSDRSELIVGRPEAVYFYEVDGRGPCWAFEGEKKFMGWFRGYLLCVIDDSKTGNTVFNVYDLRNRLIAYSIVVDKVSNMLCEWGNIILIKADKSLLCITEKDMESKLDMLFKKNLYTVAINLVQSQHADAAATANVMRKYGDHLYGKQDFDEAMLQYINTIGYLEPSFVIQKFLDAQRIYNLTNYLEKLHEKGLASKDHTTLLLNCYTKLKDVEKLNTFIRKEDGIGELKFDVETAIRVCRAANYHEHAMYVAKKAGKHEWYLKILLEDLGNYDEALQYVSSLEPSQAGVTIEQYGKILIEHKPKETIDILMRLCTEQGIPNGVFLSMLPSPVDFITVFVQHPHSLMHFLERYAEIVQDSPAQAEINNTLLELYLSRDLNFPSISLSENGLDKDLIDHSVAAAVSKADPEKKTNADSKDAMEKDCTERQQKGLELLKMAWPSDLEQPLYDVDLAVILCEMNSFKDGLLYLYEKMKFYKEVIACYMQNHDHEGLIACCKRLGDSSKGGDPSLWADLLKYFGEIGEDCTKEVKEVLTYIERDDILPPIIVLQTLAKNPCLTLSVIKDYIARKLEQESKIIEEDRRAVEKYQETTKNMRKEIEDLRTNARIFQLSKCTACTFTLDIPAVHFMCMHSFHQRCLGDNEKECPECAPEYRSVMEMKRSLEQNSKDQDLFFQQVKGSKDGFSVIAEYFGKGIISKTRDATS</sequence>